<evidence type="ECO:0000250" key="1">
    <source>
        <dbReference type="UniProtKB" id="E1QU22"/>
    </source>
</evidence>
<evidence type="ECO:0000255" key="2">
    <source>
        <dbReference type="HAMAP-Rule" id="MF_01116"/>
    </source>
</evidence>
<evidence type="ECO:0000305" key="3"/>
<dbReference type="EC" id="2.5.1.157" evidence="2"/>
<dbReference type="EMBL" id="AE000666">
    <property type="protein sequence ID" value="AAB85060.1"/>
    <property type="status" value="ALT_INIT"/>
    <property type="molecule type" value="Genomic_DNA"/>
</dbReference>
<dbReference type="PIR" id="C69173">
    <property type="entry name" value="C69173"/>
</dbReference>
<dbReference type="RefSeq" id="WP_048060842.1">
    <property type="nucleotide sequence ID" value="NC_000916.1"/>
</dbReference>
<dbReference type="SMR" id="O26654"/>
<dbReference type="FunCoup" id="O26654">
    <property type="interactions" value="82"/>
</dbReference>
<dbReference type="STRING" id="187420.MTH_554"/>
<dbReference type="PaxDb" id="187420-MTH_554"/>
<dbReference type="EnsemblBacteria" id="AAB85060">
    <property type="protein sequence ID" value="AAB85060"/>
    <property type="gene ID" value="MTH_554"/>
</dbReference>
<dbReference type="KEGG" id="mth:MTH_554"/>
<dbReference type="PATRIC" id="fig|187420.15.peg.534"/>
<dbReference type="HOGENOM" id="CLU_035060_4_2_2"/>
<dbReference type="InParanoid" id="O26654"/>
<dbReference type="Proteomes" id="UP000005223">
    <property type="component" value="Chromosome"/>
</dbReference>
<dbReference type="GO" id="GO:0005737">
    <property type="term" value="C:cytoplasm"/>
    <property type="evidence" value="ECO:0007669"/>
    <property type="project" value="UniProtKB-SubCell"/>
</dbReference>
<dbReference type="GO" id="GO:0106388">
    <property type="term" value="F:18S rRNA aminocarboxypropyltransferase activity"/>
    <property type="evidence" value="ECO:0007669"/>
    <property type="project" value="InterPro"/>
</dbReference>
<dbReference type="GO" id="GO:1904047">
    <property type="term" value="F:S-adenosyl-L-methionine binding"/>
    <property type="evidence" value="ECO:0007669"/>
    <property type="project" value="UniProtKB-UniRule"/>
</dbReference>
<dbReference type="GO" id="GO:0000455">
    <property type="term" value="P:enzyme-directed rRNA pseudouridine synthesis"/>
    <property type="evidence" value="ECO:0007669"/>
    <property type="project" value="UniProtKB-UniRule"/>
</dbReference>
<dbReference type="HAMAP" id="MF_01116">
    <property type="entry name" value="TSR3"/>
    <property type="match status" value="1"/>
</dbReference>
<dbReference type="InterPro" id="IPR022968">
    <property type="entry name" value="Tsr3-like"/>
</dbReference>
<dbReference type="InterPro" id="IPR007177">
    <property type="entry name" value="Tsr3_C"/>
</dbReference>
<dbReference type="NCBIfam" id="NF002621">
    <property type="entry name" value="PRK02287.1"/>
    <property type="match status" value="1"/>
</dbReference>
<dbReference type="PANTHER" id="PTHR20426:SF0">
    <property type="entry name" value="18S RRNA AMINOCARBOXYPROPYLTRANSFERASE"/>
    <property type="match status" value="1"/>
</dbReference>
<dbReference type="PANTHER" id="PTHR20426">
    <property type="entry name" value="RIBOSOME BIOGENESIS PROTEIN TSR3 HOMOLOG"/>
    <property type="match status" value="1"/>
</dbReference>
<dbReference type="Pfam" id="PF04034">
    <property type="entry name" value="Ribo_biogen_C"/>
    <property type="match status" value="1"/>
</dbReference>
<feature type="chain" id="PRO_0000094421" description="16S rRNA aminocarboxypropyltransferase">
    <location>
        <begin position="1"/>
        <end position="169"/>
    </location>
</feature>
<feature type="binding site" evidence="1 2">
    <location>
        <position position="17"/>
    </location>
    <ligand>
        <name>S-adenosyl-L-methionine</name>
        <dbReference type="ChEBI" id="CHEBI:59789"/>
    </ligand>
</feature>
<feature type="binding site" evidence="2">
    <location>
        <position position="67"/>
    </location>
    <ligand>
        <name>S-adenosyl-L-methionine</name>
        <dbReference type="ChEBI" id="CHEBI:59789"/>
    </ligand>
</feature>
<feature type="binding site" evidence="1 2">
    <location>
        <position position="90"/>
    </location>
    <ligand>
        <name>S-adenosyl-L-methionine</name>
        <dbReference type="ChEBI" id="CHEBI:59789"/>
    </ligand>
</feature>
<feature type="binding site" evidence="1 2">
    <location>
        <position position="109"/>
    </location>
    <ligand>
        <name>S-adenosyl-L-methionine</name>
        <dbReference type="ChEBI" id="CHEBI:59789"/>
    </ligand>
</feature>
<comment type="function">
    <text evidence="2">Aminocarboxypropyltransferase that catalyzes the aminocarboxypropyl transfer on pseudouridine corresponding to position 914 in M.jannaschii 16S rRNA. It constitutes the last step in biosynthesis of the hypermodified N1-methyl-N3-(3-amino-3-carboxypropyl) pseudouridine (m1acp3-Psi).</text>
</comment>
<comment type="catalytic activity">
    <reaction evidence="2">
        <text>an N(1)-methylpseudouridine in rRNA + S-adenosyl-L-methionine = N(1)-methyl-N(3)-[(3S)-3-amino-3-carboxypropyl]pseudouridine in rRNA + S-methyl-5'-thioadenosine + H(+)</text>
        <dbReference type="Rhea" id="RHEA:63296"/>
        <dbReference type="Rhea" id="RHEA-COMP:11634"/>
        <dbReference type="Rhea" id="RHEA-COMP:16310"/>
        <dbReference type="ChEBI" id="CHEBI:15378"/>
        <dbReference type="ChEBI" id="CHEBI:17509"/>
        <dbReference type="ChEBI" id="CHEBI:59789"/>
        <dbReference type="ChEBI" id="CHEBI:74890"/>
        <dbReference type="ChEBI" id="CHEBI:146234"/>
        <dbReference type="EC" id="2.5.1.157"/>
    </reaction>
</comment>
<comment type="subcellular location">
    <subcellularLocation>
        <location evidence="2">Cytoplasm</location>
    </subcellularLocation>
</comment>
<comment type="similarity">
    <text evidence="2">Belongs to the TDD superfamily. TSR3 family.</text>
</comment>
<comment type="sequence caution" evidence="3">
    <conflict type="erroneous initiation">
        <sequence resource="EMBL-CDS" id="AAB85060"/>
    </conflict>
</comment>
<name>TSR3_METTH</name>
<reference key="1">
    <citation type="journal article" date="1997" name="J. Bacteriol.">
        <title>Complete genome sequence of Methanobacterium thermoautotrophicum deltaH: functional analysis and comparative genomics.</title>
        <authorList>
            <person name="Smith D.R."/>
            <person name="Doucette-Stamm L.A."/>
            <person name="Deloughery C."/>
            <person name="Lee H.-M."/>
            <person name="Dubois J."/>
            <person name="Aldredge T."/>
            <person name="Bashirzadeh R."/>
            <person name="Blakely D."/>
            <person name="Cook R."/>
            <person name="Gilbert K."/>
            <person name="Harrison D."/>
            <person name="Hoang L."/>
            <person name="Keagle P."/>
            <person name="Lumm W."/>
            <person name="Pothier B."/>
            <person name="Qiu D."/>
            <person name="Spadafora R."/>
            <person name="Vicare R."/>
            <person name="Wang Y."/>
            <person name="Wierzbowski J."/>
            <person name="Gibson R."/>
            <person name="Jiwani N."/>
            <person name="Caruso A."/>
            <person name="Bush D."/>
            <person name="Safer H."/>
            <person name="Patwell D."/>
            <person name="Prabhakar S."/>
            <person name="McDougall S."/>
            <person name="Shimer G."/>
            <person name="Goyal A."/>
            <person name="Pietrovski S."/>
            <person name="Church G.M."/>
            <person name="Daniels C.J."/>
            <person name="Mao J.-I."/>
            <person name="Rice P."/>
            <person name="Noelling J."/>
            <person name="Reeve J.N."/>
        </authorList>
    </citation>
    <scope>NUCLEOTIDE SEQUENCE [LARGE SCALE GENOMIC DNA]</scope>
    <source>
        <strain>ATCC 29096 / DSM 1053 / JCM 10044 / NBRC 100330 / Delta H</strain>
    </source>
</reference>
<keyword id="KW-0963">Cytoplasm</keyword>
<keyword id="KW-1185">Reference proteome</keyword>
<keyword id="KW-0690">Ribosome biogenesis</keyword>
<keyword id="KW-0698">rRNA processing</keyword>
<keyword id="KW-0949">S-adenosyl-L-methionine</keyword>
<keyword id="KW-0808">Transferase</keyword>
<proteinExistence type="inferred from homology"/>
<gene>
    <name type="ordered locus">MTH_554</name>
</gene>
<protein>
    <recommendedName>
        <fullName evidence="2 3">16S rRNA aminocarboxypropyltransferase</fullName>
        <ecNumber evidence="2">2.5.1.157</ecNumber>
    </recommendedName>
</protein>
<sequence length="169" mass="18916">MKIVVYHAEECDRKKCTSLKLGRKGKFKIVSSLNQLPRGALVLNPFSEKAVSPEDRDMVLRRGIAALDCSWKKVKKSSVIFQTARNHRSLPFLVAANPTNYGKPCILSTAEAVAATLYIVGLKDIASDIMSYFKWGPHFLDLNRELLEAYSRAENSLEVVEIQKKFIGG</sequence>
<accession>O26654</accession>
<organism>
    <name type="scientific">Methanothermobacter thermautotrophicus (strain ATCC 29096 / DSM 1053 / JCM 10044 / NBRC 100330 / Delta H)</name>
    <name type="common">Methanobacterium thermoautotrophicum</name>
    <dbReference type="NCBI Taxonomy" id="187420"/>
    <lineage>
        <taxon>Archaea</taxon>
        <taxon>Methanobacteriati</taxon>
        <taxon>Methanobacteriota</taxon>
        <taxon>Methanomada group</taxon>
        <taxon>Methanobacteria</taxon>
        <taxon>Methanobacteriales</taxon>
        <taxon>Methanobacteriaceae</taxon>
        <taxon>Methanothermobacter</taxon>
    </lineage>
</organism>